<reference key="1">
    <citation type="submission" date="2008-07" db="EMBL/GenBank/DDBJ databases">
        <title>Complete sequence of Geobacter bemidjiensis BEM.</title>
        <authorList>
            <consortium name="US DOE Joint Genome Institute"/>
            <person name="Lucas S."/>
            <person name="Copeland A."/>
            <person name="Lapidus A."/>
            <person name="Glavina del Rio T."/>
            <person name="Dalin E."/>
            <person name="Tice H."/>
            <person name="Bruce D."/>
            <person name="Goodwin L."/>
            <person name="Pitluck S."/>
            <person name="Kiss H."/>
            <person name="Brettin T."/>
            <person name="Detter J.C."/>
            <person name="Han C."/>
            <person name="Kuske C.R."/>
            <person name="Schmutz J."/>
            <person name="Larimer F."/>
            <person name="Land M."/>
            <person name="Hauser L."/>
            <person name="Kyrpides N."/>
            <person name="Lykidis A."/>
            <person name="Lovley D."/>
            <person name="Richardson P."/>
        </authorList>
    </citation>
    <scope>NUCLEOTIDE SEQUENCE [LARGE SCALE GENOMIC DNA]</scope>
    <source>
        <strain>ATCC BAA-1014 / DSM 16622 / JCM 12645 / Bem</strain>
    </source>
</reference>
<sequence>MLTKRIIPCLDVKGGRVVKGVQFLGLRDAGDPVEIAELYDQQGADELTFLDITASSDDRDIIIDVVRRTAERVFMPLTVGGGVRVVEDIRRLLNAGADKVSINTAAVHRPEFVSEAAEKFGSQCTVVAIDARSRAGGGWEVYTHGGRNPTGIDAVEWAQRMEGMGAGEILLTSMDRDGTKDGYDLPLTRAVVDAVSIPVIASGGVGGLSHLYDGFTQAGASACLAASIFHYREYTIEEAKSYLRERGVPVRL</sequence>
<feature type="chain" id="PRO_1000135004" description="Imidazole glycerol phosphate synthase subunit HisF">
    <location>
        <begin position="1"/>
        <end position="252"/>
    </location>
</feature>
<feature type="active site" evidence="1">
    <location>
        <position position="11"/>
    </location>
</feature>
<feature type="active site" evidence="1">
    <location>
        <position position="130"/>
    </location>
</feature>
<dbReference type="EC" id="4.3.2.10" evidence="1"/>
<dbReference type="EMBL" id="CP001124">
    <property type="protein sequence ID" value="ACH40692.1"/>
    <property type="molecule type" value="Genomic_DNA"/>
</dbReference>
<dbReference type="RefSeq" id="WP_012532129.1">
    <property type="nucleotide sequence ID" value="NC_011146.1"/>
</dbReference>
<dbReference type="SMR" id="B5EDR4"/>
<dbReference type="STRING" id="404380.Gbem_3700"/>
<dbReference type="KEGG" id="gbm:Gbem_3700"/>
<dbReference type="eggNOG" id="COG0107">
    <property type="taxonomic scope" value="Bacteria"/>
</dbReference>
<dbReference type="HOGENOM" id="CLU_048577_4_0_7"/>
<dbReference type="OrthoDB" id="9807749at2"/>
<dbReference type="UniPathway" id="UPA00031">
    <property type="reaction ID" value="UER00010"/>
</dbReference>
<dbReference type="Proteomes" id="UP000008825">
    <property type="component" value="Chromosome"/>
</dbReference>
<dbReference type="GO" id="GO:0005737">
    <property type="term" value="C:cytoplasm"/>
    <property type="evidence" value="ECO:0007669"/>
    <property type="project" value="UniProtKB-SubCell"/>
</dbReference>
<dbReference type="GO" id="GO:0000107">
    <property type="term" value="F:imidazoleglycerol-phosphate synthase activity"/>
    <property type="evidence" value="ECO:0007669"/>
    <property type="project" value="UniProtKB-UniRule"/>
</dbReference>
<dbReference type="GO" id="GO:0016829">
    <property type="term" value="F:lyase activity"/>
    <property type="evidence" value="ECO:0007669"/>
    <property type="project" value="UniProtKB-KW"/>
</dbReference>
<dbReference type="GO" id="GO:0000105">
    <property type="term" value="P:L-histidine biosynthetic process"/>
    <property type="evidence" value="ECO:0007669"/>
    <property type="project" value="UniProtKB-UniRule"/>
</dbReference>
<dbReference type="CDD" id="cd04731">
    <property type="entry name" value="HisF"/>
    <property type="match status" value="1"/>
</dbReference>
<dbReference type="FunFam" id="3.20.20.70:FF:000006">
    <property type="entry name" value="Imidazole glycerol phosphate synthase subunit HisF"/>
    <property type="match status" value="1"/>
</dbReference>
<dbReference type="Gene3D" id="3.20.20.70">
    <property type="entry name" value="Aldolase class I"/>
    <property type="match status" value="1"/>
</dbReference>
<dbReference type="HAMAP" id="MF_01013">
    <property type="entry name" value="HisF"/>
    <property type="match status" value="1"/>
</dbReference>
<dbReference type="InterPro" id="IPR013785">
    <property type="entry name" value="Aldolase_TIM"/>
</dbReference>
<dbReference type="InterPro" id="IPR006062">
    <property type="entry name" value="His_biosynth"/>
</dbReference>
<dbReference type="InterPro" id="IPR004651">
    <property type="entry name" value="HisF"/>
</dbReference>
<dbReference type="InterPro" id="IPR050064">
    <property type="entry name" value="IGPS_HisA/HisF"/>
</dbReference>
<dbReference type="InterPro" id="IPR011060">
    <property type="entry name" value="RibuloseP-bd_barrel"/>
</dbReference>
<dbReference type="NCBIfam" id="TIGR00735">
    <property type="entry name" value="hisF"/>
    <property type="match status" value="1"/>
</dbReference>
<dbReference type="PANTHER" id="PTHR21235:SF2">
    <property type="entry name" value="IMIDAZOLE GLYCEROL PHOSPHATE SYNTHASE HISHF"/>
    <property type="match status" value="1"/>
</dbReference>
<dbReference type="PANTHER" id="PTHR21235">
    <property type="entry name" value="IMIDAZOLE GLYCEROL PHOSPHATE SYNTHASE SUBUNIT HISF/H IGP SYNTHASE SUBUNIT HISF/H"/>
    <property type="match status" value="1"/>
</dbReference>
<dbReference type="Pfam" id="PF00977">
    <property type="entry name" value="His_biosynth"/>
    <property type="match status" value="1"/>
</dbReference>
<dbReference type="SUPFAM" id="SSF51366">
    <property type="entry name" value="Ribulose-phoshate binding barrel"/>
    <property type="match status" value="1"/>
</dbReference>
<proteinExistence type="inferred from homology"/>
<comment type="function">
    <text evidence="1">IGPS catalyzes the conversion of PRFAR and glutamine to IGP, AICAR and glutamate. The HisF subunit catalyzes the cyclization activity that produces IGP and AICAR from PRFAR using the ammonia provided by the HisH subunit.</text>
</comment>
<comment type="catalytic activity">
    <reaction evidence="1">
        <text>5-[(5-phospho-1-deoxy-D-ribulos-1-ylimino)methylamino]-1-(5-phospho-beta-D-ribosyl)imidazole-4-carboxamide + L-glutamine = D-erythro-1-(imidazol-4-yl)glycerol 3-phosphate + 5-amino-1-(5-phospho-beta-D-ribosyl)imidazole-4-carboxamide + L-glutamate + H(+)</text>
        <dbReference type="Rhea" id="RHEA:24793"/>
        <dbReference type="ChEBI" id="CHEBI:15378"/>
        <dbReference type="ChEBI" id="CHEBI:29985"/>
        <dbReference type="ChEBI" id="CHEBI:58278"/>
        <dbReference type="ChEBI" id="CHEBI:58359"/>
        <dbReference type="ChEBI" id="CHEBI:58475"/>
        <dbReference type="ChEBI" id="CHEBI:58525"/>
        <dbReference type="EC" id="4.3.2.10"/>
    </reaction>
</comment>
<comment type="pathway">
    <text evidence="1">Amino-acid biosynthesis; L-histidine biosynthesis; L-histidine from 5-phospho-alpha-D-ribose 1-diphosphate: step 5/9.</text>
</comment>
<comment type="subunit">
    <text evidence="1">Heterodimer of HisH and HisF.</text>
</comment>
<comment type="subcellular location">
    <subcellularLocation>
        <location evidence="1">Cytoplasm</location>
    </subcellularLocation>
</comment>
<comment type="similarity">
    <text evidence="1">Belongs to the HisA/HisF family.</text>
</comment>
<organism>
    <name type="scientific">Citrifermentans bemidjiense (strain ATCC BAA-1014 / DSM 16622 / JCM 12645 / Bem)</name>
    <name type="common">Geobacter bemidjiensis</name>
    <dbReference type="NCBI Taxonomy" id="404380"/>
    <lineage>
        <taxon>Bacteria</taxon>
        <taxon>Pseudomonadati</taxon>
        <taxon>Thermodesulfobacteriota</taxon>
        <taxon>Desulfuromonadia</taxon>
        <taxon>Geobacterales</taxon>
        <taxon>Geobacteraceae</taxon>
        <taxon>Citrifermentans</taxon>
    </lineage>
</organism>
<accession>B5EDR4</accession>
<protein>
    <recommendedName>
        <fullName evidence="1">Imidazole glycerol phosphate synthase subunit HisF</fullName>
        <ecNumber evidence="1">4.3.2.10</ecNumber>
    </recommendedName>
    <alternativeName>
        <fullName evidence="1">IGP synthase cyclase subunit</fullName>
    </alternativeName>
    <alternativeName>
        <fullName evidence="1">IGP synthase subunit HisF</fullName>
    </alternativeName>
    <alternativeName>
        <fullName evidence="1">ImGP synthase subunit HisF</fullName>
        <shortName evidence="1">IGPS subunit HisF</shortName>
    </alternativeName>
</protein>
<gene>
    <name evidence="1" type="primary">hisF</name>
    <name type="ordered locus">Gbem_3700</name>
</gene>
<evidence type="ECO:0000255" key="1">
    <source>
        <dbReference type="HAMAP-Rule" id="MF_01013"/>
    </source>
</evidence>
<name>HIS6_CITBB</name>
<keyword id="KW-0028">Amino-acid biosynthesis</keyword>
<keyword id="KW-0963">Cytoplasm</keyword>
<keyword id="KW-0368">Histidine biosynthesis</keyword>
<keyword id="KW-0456">Lyase</keyword>
<keyword id="KW-1185">Reference proteome</keyword>